<reference key="1">
    <citation type="journal article" date="2006" name="Proc. Natl. Acad. Sci. U.S.A.">
        <title>The partitioned Rhizobium etli genome: genetic and metabolic redundancy in seven interacting replicons.</title>
        <authorList>
            <person name="Gonzalez V."/>
            <person name="Santamaria R.I."/>
            <person name="Bustos P."/>
            <person name="Hernandez-Gonzalez I."/>
            <person name="Medrano-Soto A."/>
            <person name="Moreno-Hagelsieb G."/>
            <person name="Janga S.C."/>
            <person name="Ramirez M.A."/>
            <person name="Jimenez-Jacinto V."/>
            <person name="Collado-Vides J."/>
            <person name="Davila G."/>
        </authorList>
    </citation>
    <scope>NUCLEOTIDE SEQUENCE [LARGE SCALE GENOMIC DNA]</scope>
    <source>
        <strain>ATCC 51251 / DSM 11541 / JCM 21823 / NBRC 15573 / CFN 42</strain>
    </source>
</reference>
<gene>
    <name evidence="1" type="primary">tatB</name>
    <name type="ordered locus">RHE_CH01824</name>
</gene>
<dbReference type="EMBL" id="CP000133">
    <property type="protein sequence ID" value="ABC90617.1"/>
    <property type="molecule type" value="Genomic_DNA"/>
</dbReference>
<dbReference type="RefSeq" id="WP_011425114.1">
    <property type="nucleotide sequence ID" value="NC_007761.1"/>
</dbReference>
<dbReference type="SMR" id="Q2K969"/>
<dbReference type="KEGG" id="ret:RHE_CH01824"/>
<dbReference type="eggNOG" id="COG1826">
    <property type="taxonomic scope" value="Bacteria"/>
</dbReference>
<dbReference type="HOGENOM" id="CLU_086034_1_3_5"/>
<dbReference type="OrthoDB" id="7206969at2"/>
<dbReference type="Proteomes" id="UP000001936">
    <property type="component" value="Chromosome"/>
</dbReference>
<dbReference type="GO" id="GO:0033281">
    <property type="term" value="C:TAT protein transport complex"/>
    <property type="evidence" value="ECO:0007669"/>
    <property type="project" value="UniProtKB-UniRule"/>
</dbReference>
<dbReference type="GO" id="GO:0008320">
    <property type="term" value="F:protein transmembrane transporter activity"/>
    <property type="evidence" value="ECO:0007669"/>
    <property type="project" value="UniProtKB-UniRule"/>
</dbReference>
<dbReference type="GO" id="GO:0043953">
    <property type="term" value="P:protein transport by the Tat complex"/>
    <property type="evidence" value="ECO:0007669"/>
    <property type="project" value="UniProtKB-UniRule"/>
</dbReference>
<dbReference type="Gene3D" id="1.20.5.3310">
    <property type="match status" value="1"/>
</dbReference>
<dbReference type="HAMAP" id="MF_00237">
    <property type="entry name" value="TatB"/>
    <property type="match status" value="1"/>
</dbReference>
<dbReference type="InterPro" id="IPR003369">
    <property type="entry name" value="TatA/B/E"/>
</dbReference>
<dbReference type="InterPro" id="IPR018448">
    <property type="entry name" value="TatB"/>
</dbReference>
<dbReference type="NCBIfam" id="TIGR01410">
    <property type="entry name" value="tatB"/>
    <property type="match status" value="1"/>
</dbReference>
<dbReference type="PANTHER" id="PTHR33162">
    <property type="entry name" value="SEC-INDEPENDENT PROTEIN TRANSLOCASE PROTEIN TATA, CHLOROPLASTIC"/>
    <property type="match status" value="1"/>
</dbReference>
<dbReference type="PANTHER" id="PTHR33162:SF1">
    <property type="entry name" value="SEC-INDEPENDENT PROTEIN TRANSLOCASE PROTEIN TATA, CHLOROPLASTIC"/>
    <property type="match status" value="1"/>
</dbReference>
<dbReference type="Pfam" id="PF02416">
    <property type="entry name" value="TatA_B_E"/>
    <property type="match status" value="1"/>
</dbReference>
<dbReference type="PRINTS" id="PR01506">
    <property type="entry name" value="TATBPROTEIN"/>
</dbReference>
<comment type="function">
    <text evidence="1">Part of the twin-arginine translocation (Tat) system that transports large folded proteins containing a characteristic twin-arginine motif in their signal peptide across membranes. Together with TatC, TatB is part of a receptor directly interacting with Tat signal peptides. TatB may form an oligomeric binding site that transiently accommodates folded Tat precursor proteins before their translocation.</text>
</comment>
<comment type="subunit">
    <text evidence="1">The Tat system comprises two distinct complexes: a TatABC complex, containing multiple copies of TatA, TatB and TatC subunits, and a separate TatA complex, containing only TatA subunits. Substrates initially bind to the TatABC complex, which probably triggers association of the separate TatA complex to form the active translocon.</text>
</comment>
<comment type="subcellular location">
    <subcellularLocation>
        <location evidence="1">Cell inner membrane</location>
        <topology evidence="1">Single-pass membrane protein</topology>
    </subcellularLocation>
</comment>
<comment type="similarity">
    <text evidence="1">Belongs to the TatB family.</text>
</comment>
<sequence>MFDIGWTELLVIAVVLIVVVGPKDLPPMLRAFGKMTQRARKVAGEFRAQFDEALREAELDDVRQTISDAQKLNPVSSLREAMNPLRQMGNEIKADLQKATAVTENKTEVPSAAMSAPTPSMSLPETPPVVPTPAPAPEPAAVAAETVAAKPKAPRKPRAKAADKAAFAIAAPVENPPAEKPKRTTAARKPAAPKTPVQTKKKKDEA</sequence>
<proteinExistence type="inferred from homology"/>
<feature type="chain" id="PRO_0000301219" description="Sec-independent protein translocase protein TatB">
    <location>
        <begin position="1"/>
        <end position="206"/>
    </location>
</feature>
<feature type="transmembrane region" description="Helical" evidence="1">
    <location>
        <begin position="1"/>
        <end position="21"/>
    </location>
</feature>
<feature type="region of interest" description="Disordered" evidence="2">
    <location>
        <begin position="104"/>
        <end position="206"/>
    </location>
</feature>
<feature type="compositionally biased region" description="Low complexity" evidence="2">
    <location>
        <begin position="110"/>
        <end position="124"/>
    </location>
</feature>
<feature type="compositionally biased region" description="Pro residues" evidence="2">
    <location>
        <begin position="125"/>
        <end position="138"/>
    </location>
</feature>
<feature type="compositionally biased region" description="Low complexity" evidence="2">
    <location>
        <begin position="139"/>
        <end position="151"/>
    </location>
</feature>
<feature type="compositionally biased region" description="Low complexity" evidence="2">
    <location>
        <begin position="187"/>
        <end position="196"/>
    </location>
</feature>
<accession>Q2K969</accession>
<keyword id="KW-0997">Cell inner membrane</keyword>
<keyword id="KW-1003">Cell membrane</keyword>
<keyword id="KW-0472">Membrane</keyword>
<keyword id="KW-0653">Protein transport</keyword>
<keyword id="KW-1185">Reference proteome</keyword>
<keyword id="KW-0811">Translocation</keyword>
<keyword id="KW-0812">Transmembrane</keyword>
<keyword id="KW-1133">Transmembrane helix</keyword>
<keyword id="KW-0813">Transport</keyword>
<evidence type="ECO:0000255" key="1">
    <source>
        <dbReference type="HAMAP-Rule" id="MF_00237"/>
    </source>
</evidence>
<evidence type="ECO:0000256" key="2">
    <source>
        <dbReference type="SAM" id="MobiDB-lite"/>
    </source>
</evidence>
<protein>
    <recommendedName>
        <fullName evidence="1">Sec-independent protein translocase protein TatB</fullName>
    </recommendedName>
</protein>
<organism>
    <name type="scientific">Rhizobium etli (strain ATCC 51251 / DSM 11541 / JCM 21823 / NBRC 15573 / CFN 42)</name>
    <dbReference type="NCBI Taxonomy" id="347834"/>
    <lineage>
        <taxon>Bacteria</taxon>
        <taxon>Pseudomonadati</taxon>
        <taxon>Pseudomonadota</taxon>
        <taxon>Alphaproteobacteria</taxon>
        <taxon>Hyphomicrobiales</taxon>
        <taxon>Rhizobiaceae</taxon>
        <taxon>Rhizobium/Agrobacterium group</taxon>
        <taxon>Rhizobium</taxon>
    </lineage>
</organism>
<name>TATB_RHIEC</name>